<evidence type="ECO:0000255" key="1"/>
<evidence type="ECO:0000269" key="2">
    <source>
    </source>
</evidence>
<evidence type="ECO:0000269" key="3">
    <source>
    </source>
</evidence>
<evidence type="ECO:0000269" key="4">
    <source>
    </source>
</evidence>
<evidence type="ECO:0000269" key="5">
    <source>
    </source>
</evidence>
<evidence type="ECO:0000269" key="6">
    <source ref="2"/>
</evidence>
<evidence type="ECO:0000303" key="7">
    <source>
    </source>
</evidence>
<evidence type="ECO:0000305" key="8"/>
<evidence type="ECO:0000305" key="9">
    <source>
    </source>
</evidence>
<evidence type="ECO:0000312" key="10">
    <source>
        <dbReference type="HGNC" id="HGNC:8959"/>
    </source>
</evidence>
<gene>
    <name evidence="10" type="primary">PIGB</name>
</gene>
<organism>
    <name type="scientific">Homo sapiens</name>
    <name type="common">Human</name>
    <dbReference type="NCBI Taxonomy" id="9606"/>
    <lineage>
        <taxon>Eukaryota</taxon>
        <taxon>Metazoa</taxon>
        <taxon>Chordata</taxon>
        <taxon>Craniata</taxon>
        <taxon>Vertebrata</taxon>
        <taxon>Euteleostomi</taxon>
        <taxon>Mammalia</taxon>
        <taxon>Eutheria</taxon>
        <taxon>Euarchontoglires</taxon>
        <taxon>Primates</taxon>
        <taxon>Haplorrhini</taxon>
        <taxon>Catarrhini</taxon>
        <taxon>Hominidae</taxon>
        <taxon>Homo</taxon>
    </lineage>
</organism>
<accession>Q92521</accession>
<accession>Q53FF9</accession>
<accession>Q8WVN7</accession>
<sequence length="554" mass="65056">MRRPLSKCGMEPGGGDASLTLHGLQNRSHGKIKLRKRKSTLYFNTQEKSARRRGDLLGENIYLLLFTIALRILNCFLVQTSFVPDEYWQSLEVSHHMVFNYGYLTWEWTERLRSYTYPLIFASIYKILHLLGKDSVQLLIWIPRLAQALLSAVADVRLYSLMKQLENQEVARWVFFCQLCSWFTWYCCTRTLTNTMETVLTIIALFYYPLEGSKSMNSVKYSSLVALAFIIRPTAVILWTPLLFRHFCQEPRKLDLILHHFLPVGFVTLSLSLMIDRIFFGQWTLVQFNFLKFNVLQNWGTFYGSHPWHWYFSQGFPVILGTHLPFFIHGCYLAPKRYRILLVTVLWTLLVYSMLSHKEFRFIYPVLPFCMVFCGYSLTHLKTWKKPALSFLFLSNLFLALYTGLVHQRGTLDVMSHIQKVCYNNPNKSSASIFIMMPCHSTPYYSHVHCPLPMRFLQCPPDLTGKSHYLDEADVFYLNPLNWLHREFHDDASLPTHLITFSILEEEISAFLISSNYKRTAVFFHTHLPEGRIGSHIYVYERKLKGKFNMKMKF</sequence>
<protein>
    <recommendedName>
        <fullName evidence="8">GPI alpha-1,2-mannosyltransferase 3</fullName>
        <ecNumber evidence="3 5">2.4.1.-</ecNumber>
    </recommendedName>
    <alternativeName>
        <fullName>GPI mannosyltransferase III</fullName>
        <shortName>GPI-MT-III</shortName>
    </alternativeName>
    <alternativeName>
        <fullName evidence="7">Phosphatidylinositol-glycan biosynthesis class B protein</fullName>
        <shortName evidence="7">PIG-B</shortName>
    </alternativeName>
</protein>
<comment type="function">
    <text evidence="5 9">Alpha-1,2-mannosyltransferase that catalyzes the transfer of the third mannose, via an alpha-1,2 bond, from a dolichol-phosphate-mannose (Dol-P-Man) to an alpha-D-Man-(1-&gt;6)-2-PEtn-alpha-D-Man-(1-&gt;4)-alpha-D-GlcN-(1-&gt;6)-(1-radyl,2-acyl-sn-glycero-3-phospho)-2-acyl-inositol intermediate to generate an alpha-D-Man-(1-&gt;2)-alpha-D-Man-(1-&gt;6)-2-PEtn-alpha-D-Man-(1-&gt;4)-alpha-D-GlcN-(1-&gt;6)-(1-radyl,2-acyl-sn-glycero-3-phospho)-2-acyl-inositol (also termed H6) and participates in the nineth step of the glycosylphosphatidylinositol-anchor biosynthesis (PubMed:8861954). May also add the third mannose to an alpha-D-Man-(1-&gt;6)-alpha-D-Man-(1-&gt;4)-alpha-D-GlcN-(1-&gt;6)-(1-radyl,2-acyl-sn-glycero-3-phospho)-2-acyl-inositol (also termed H3) intermediate generating an alpha-D-Man-(1-&gt;2)-alpha-D-Man-(1-&gt;6)-alpha-D-Man-(1-&gt;4)-alpha-D-GlcN-(1-&gt;6)-(1-radyl,2-acyl-sn-glycero-3-phospho)-2-acyl-inositol (also termed H4) (Probable).</text>
</comment>
<comment type="pathway">
    <text evidence="5">Glycolipid biosynthesis; glycosylphosphatidylinositol-anchor biosynthesis.</text>
</comment>
<comment type="subcellular location">
    <subcellularLocation>
        <location evidence="5">Endoplasmic reticulum membrane</location>
        <topology evidence="1">Multi-pass membrane protein</topology>
    </subcellularLocation>
</comment>
<comment type="disease" evidence="4">
    <disease id="DI-05661">
        <name>Developmental and epileptic encephalopathy 80</name>
        <acronym>DEE80</acronym>
        <description>A form of epileptic encephalopathy, a heterogeneous group of severe early-onset epilepsies characterized by refractory seizures, neurodevelopmental impairment, and poor prognosis. Development is normal prior to seizure onset, after which cognitive and motor delays become apparent. DEE80 is an autosomal recessive form characterized by onset of refractory seizures in the first year of life, severe global developmental delay and/or intellectual disability. Additional variable features include polyneuropathy, hearing loss, visual impairment, dysmorphic or coarse facial features, and distal skeletal abnormalities.</description>
        <dbReference type="MIM" id="618580"/>
    </disease>
    <text>The disease is caused by variants affecting the gene represented in this entry.</text>
</comment>
<comment type="similarity">
    <text evidence="8">Belongs to the glycosyltransferase 22 family. PIGB subfamily.</text>
</comment>
<dbReference type="EC" id="2.4.1.-" evidence="3 5"/>
<dbReference type="EMBL" id="D42138">
    <property type="protein sequence ID" value="BAA07709.1"/>
    <property type="molecule type" value="mRNA"/>
</dbReference>
<dbReference type="EMBL" id="AK223330">
    <property type="protein sequence ID" value="BAD97050.1"/>
    <property type="molecule type" value="mRNA"/>
</dbReference>
<dbReference type="EMBL" id="BC017711">
    <property type="protein sequence ID" value="AAH17711.1"/>
    <property type="molecule type" value="mRNA"/>
</dbReference>
<dbReference type="CCDS" id="CCDS61641.1"/>
<dbReference type="PIR" id="S71751">
    <property type="entry name" value="S71751"/>
</dbReference>
<dbReference type="RefSeq" id="NP_004846.4">
    <property type="nucleotide sequence ID" value="NM_004855.4"/>
</dbReference>
<dbReference type="BioGRID" id="114870">
    <property type="interactions" value="21"/>
</dbReference>
<dbReference type="FunCoup" id="Q92521">
    <property type="interactions" value="2343"/>
</dbReference>
<dbReference type="IntAct" id="Q92521">
    <property type="interactions" value="16"/>
</dbReference>
<dbReference type="STRING" id="9606.ENSP00000164305"/>
<dbReference type="CAZy" id="GT22">
    <property type="family name" value="Glycosyltransferase Family 22"/>
</dbReference>
<dbReference type="GlyCosmos" id="Q92521">
    <property type="glycosylation" value="2 sites, No reported glycans"/>
</dbReference>
<dbReference type="GlyGen" id="Q92521">
    <property type="glycosylation" value="2 sites, 1 N-linked glycan (1 site)"/>
</dbReference>
<dbReference type="iPTMnet" id="Q92521"/>
<dbReference type="PhosphoSitePlus" id="Q92521"/>
<dbReference type="BioMuta" id="PIGB"/>
<dbReference type="DMDM" id="74716597"/>
<dbReference type="jPOST" id="Q92521"/>
<dbReference type="MassIVE" id="Q92521"/>
<dbReference type="PaxDb" id="9606-ENSP00000164305"/>
<dbReference type="PeptideAtlas" id="Q92521"/>
<dbReference type="ProteomicsDB" id="75280"/>
<dbReference type="Antibodypedia" id="25067">
    <property type="antibodies" value="94 antibodies from 19 providers"/>
</dbReference>
<dbReference type="DNASU" id="9488"/>
<dbReference type="Ensembl" id="ENST00000164305.10">
    <property type="protein sequence ID" value="ENSP00000164305.5"/>
    <property type="gene ID" value="ENSG00000069943.10"/>
</dbReference>
<dbReference type="GeneID" id="9488"/>
<dbReference type="KEGG" id="hsa:9488"/>
<dbReference type="MANE-Select" id="ENST00000164305.10">
    <property type="protein sequence ID" value="ENSP00000164305.5"/>
    <property type="RefSeq nucleotide sequence ID" value="NM_004855.5"/>
    <property type="RefSeq protein sequence ID" value="NP_004846.4"/>
</dbReference>
<dbReference type="UCSC" id="uc002act.4">
    <property type="organism name" value="human"/>
</dbReference>
<dbReference type="AGR" id="HGNC:8959"/>
<dbReference type="CTD" id="9488"/>
<dbReference type="DisGeNET" id="9488"/>
<dbReference type="GeneCards" id="PIGB"/>
<dbReference type="HGNC" id="HGNC:8959">
    <property type="gene designation" value="PIGB"/>
</dbReference>
<dbReference type="HPA" id="ENSG00000069943">
    <property type="expression patterns" value="Low tissue specificity"/>
</dbReference>
<dbReference type="MalaCards" id="PIGB"/>
<dbReference type="MIM" id="604122">
    <property type="type" value="gene"/>
</dbReference>
<dbReference type="MIM" id="618580">
    <property type="type" value="phenotype"/>
</dbReference>
<dbReference type="neXtProt" id="NX_Q92521"/>
<dbReference type="OpenTargets" id="ENSG00000069943"/>
<dbReference type="PharmGKB" id="PA33290"/>
<dbReference type="VEuPathDB" id="HostDB:ENSG00000069943"/>
<dbReference type="eggNOG" id="KOG1771">
    <property type="taxonomic scope" value="Eukaryota"/>
</dbReference>
<dbReference type="GeneTree" id="ENSGT00950000183090"/>
<dbReference type="HOGENOM" id="CLU_012353_2_0_1"/>
<dbReference type="InParanoid" id="Q92521"/>
<dbReference type="OrthoDB" id="416834at2759"/>
<dbReference type="PAN-GO" id="Q92521">
    <property type="GO annotations" value="3 GO annotations based on evolutionary models"/>
</dbReference>
<dbReference type="PhylomeDB" id="Q92521"/>
<dbReference type="TreeFam" id="TF313518"/>
<dbReference type="PathwayCommons" id="Q92521"/>
<dbReference type="Reactome" id="R-HSA-162710">
    <property type="pathway name" value="Synthesis of glycosylphosphatidylinositol (GPI)"/>
</dbReference>
<dbReference type="SignaLink" id="Q92521"/>
<dbReference type="UniPathway" id="UPA00196"/>
<dbReference type="BioGRID-ORCS" id="9488">
    <property type="hits" value="65 hits in 1132 CRISPR screens"/>
</dbReference>
<dbReference type="ChiTaRS" id="PIGB">
    <property type="organism name" value="human"/>
</dbReference>
<dbReference type="GeneWiki" id="PIGB"/>
<dbReference type="GenomeRNAi" id="9488"/>
<dbReference type="Pharos" id="Q92521">
    <property type="development level" value="Tbio"/>
</dbReference>
<dbReference type="PRO" id="PR:Q92521"/>
<dbReference type="Proteomes" id="UP000005640">
    <property type="component" value="Chromosome 15"/>
</dbReference>
<dbReference type="RNAct" id="Q92521">
    <property type="molecule type" value="protein"/>
</dbReference>
<dbReference type="Bgee" id="ENSG00000069943">
    <property type="expression patterns" value="Expressed in granulocyte and 172 other cell types or tissues"/>
</dbReference>
<dbReference type="ExpressionAtlas" id="Q92521">
    <property type="expression patterns" value="baseline and differential"/>
</dbReference>
<dbReference type="GO" id="GO:0005789">
    <property type="term" value="C:endoplasmic reticulum membrane"/>
    <property type="evidence" value="ECO:0000314"/>
    <property type="project" value="UniProtKB"/>
</dbReference>
<dbReference type="GO" id="GO:0016020">
    <property type="term" value="C:membrane"/>
    <property type="evidence" value="ECO:0000303"/>
    <property type="project" value="UniProtKB"/>
</dbReference>
<dbReference type="GO" id="GO:0000026">
    <property type="term" value="F:alpha-1,2-mannosyltransferase activity"/>
    <property type="evidence" value="ECO:0000314"/>
    <property type="project" value="UniProtKB"/>
</dbReference>
<dbReference type="GO" id="GO:0004376">
    <property type="term" value="F:glycolipid mannosyltransferase activity"/>
    <property type="evidence" value="ECO:0000304"/>
    <property type="project" value="Reactome"/>
</dbReference>
<dbReference type="GO" id="GO:0006506">
    <property type="term" value="P:GPI anchor biosynthetic process"/>
    <property type="evidence" value="ECO:0000314"/>
    <property type="project" value="UniProtKB"/>
</dbReference>
<dbReference type="InterPro" id="IPR005599">
    <property type="entry name" value="GPI_mannosylTrfase"/>
</dbReference>
<dbReference type="PANTHER" id="PTHR22760">
    <property type="entry name" value="GLYCOSYLTRANSFERASE"/>
    <property type="match status" value="1"/>
</dbReference>
<dbReference type="PANTHER" id="PTHR22760:SF4">
    <property type="entry name" value="GPI MANNOSYLTRANSFERASE 3"/>
    <property type="match status" value="1"/>
</dbReference>
<dbReference type="Pfam" id="PF03901">
    <property type="entry name" value="Glyco_transf_22"/>
    <property type="match status" value="1"/>
</dbReference>
<proteinExistence type="evidence at protein level"/>
<reference key="1">
    <citation type="journal article" date="1996" name="EMBO J.">
        <title>PIG-B, a membrane protein of the endoplasmic reticulum with a large lumenal domain, is involved in transferring the third mannose of the GPI anchor.</title>
        <authorList>
            <person name="Takahashi M."/>
            <person name="Inoue N."/>
            <person name="Ohishi K."/>
            <person name="Maeda Y."/>
            <person name="Nakamura N."/>
            <person name="Endo Y."/>
            <person name="Fujita T."/>
            <person name="Takeda J."/>
            <person name="Kinoshita T."/>
        </authorList>
    </citation>
    <scope>NUCLEOTIDE SEQUENCE [MRNA]</scope>
    <scope>FUNCTION</scope>
    <scope>CATALYTIC ACTIVITY</scope>
    <scope>SUBCELLULAR LOCATION</scope>
    <scope>PATHWAY</scope>
</reference>
<reference key="2">
    <citation type="submission" date="2005-04" db="EMBL/GenBank/DDBJ databases">
        <authorList>
            <person name="Suzuki Y."/>
            <person name="Sugano S."/>
            <person name="Totoki Y."/>
            <person name="Toyoda A."/>
            <person name="Takeda T."/>
            <person name="Sakaki Y."/>
            <person name="Tanaka A."/>
            <person name="Yokoyama S."/>
        </authorList>
    </citation>
    <scope>NUCLEOTIDE SEQUENCE [LARGE SCALE MRNA]</scope>
    <scope>VARIANTS LEU-68; LEU-299 AND SER-484</scope>
    <source>
        <tissue>Testis</tissue>
    </source>
</reference>
<reference key="3">
    <citation type="journal article" date="2004" name="Genome Res.">
        <title>The status, quality, and expansion of the NIH full-length cDNA project: the Mammalian Gene Collection (MGC).</title>
        <authorList>
            <consortium name="The MGC Project Team"/>
        </authorList>
    </citation>
    <scope>NUCLEOTIDE SEQUENCE [LARGE SCALE MRNA]</scope>
    <scope>VARIANT LEU-299</scope>
    <source>
        <tissue>Prostate</tissue>
    </source>
</reference>
<reference key="4">
    <citation type="journal article" date="1994" name="J. Biol. Chem.">
        <title>Glycoinositol phospholipid anchor-defective K562 mutants with biochemical lesions distinct from those in Thy-1- murine lymphoma mutants.</title>
        <authorList>
            <person name="Mohney R.P."/>
            <person name="Knez J.J."/>
            <person name="Ravi L."/>
            <person name="Sevlever D."/>
            <person name="Rosenberry T.L."/>
            <person name="Hirose S."/>
            <person name="Medof M.E."/>
        </authorList>
    </citation>
    <scope>IDENTIFICATION</scope>
</reference>
<reference key="5">
    <citation type="journal article" date="2007" name="FEMS Yeast Res.">
        <title>In vivo characterization of the GPI assembly defect in yeast mcd4-174 mutants and bypass of the Mcd4p-dependent step in mcd4Delta cells.</title>
        <authorList>
            <person name="Wiedman J.M."/>
            <person name="Fabre A.L."/>
            <person name="Taron B.W."/>
            <person name="Taron C.H."/>
            <person name="Orlean P."/>
        </authorList>
    </citation>
    <scope>FUNCTION</scope>
    <scope>CATALYTIC ACTIVITY</scope>
</reference>
<reference key="6">
    <citation type="journal article" date="2013" name="J. Proteome Res.">
        <title>Toward a comprehensive characterization of a human cancer cell phosphoproteome.</title>
        <authorList>
            <person name="Zhou H."/>
            <person name="Di Palma S."/>
            <person name="Preisinger C."/>
            <person name="Peng M."/>
            <person name="Polat A.N."/>
            <person name="Heck A.J."/>
            <person name="Mohammed S."/>
        </authorList>
    </citation>
    <scope>IDENTIFICATION BY MASS SPECTROMETRY [LARGE SCALE ANALYSIS]</scope>
    <source>
        <tissue>Cervix carcinoma</tissue>
        <tissue>Erythroleukemia</tissue>
    </source>
</reference>
<reference key="7">
    <citation type="journal article" date="2019" name="Am. J. Hum. Genet.">
        <title>Mutations in PIGB Cause an Inherited GPI Biosynthesis Defect with an Axonal Neuropathy and Metabolic Abnormality in Severe Cases.</title>
        <authorList>
            <person name="Murakami Y."/>
            <person name="Nguyen T.T.M."/>
            <person name="Baratang N."/>
            <person name="Raju P.K."/>
            <person name="Knaus A."/>
            <person name="Ellard S."/>
            <person name="Jones G."/>
            <person name="Lace B."/>
            <person name="Rousseau J."/>
            <person name="Ajeawung N.F."/>
            <person name="Kamei A."/>
            <person name="Minase G."/>
            <person name="Akasaka M."/>
            <person name="Araya N."/>
            <person name="Koshimizu E."/>
            <person name="van den Ende J."/>
            <person name="Erger F."/>
            <person name="Altmueller J."/>
            <person name="Krumina Z."/>
            <person name="Strautmanis J."/>
            <person name="Inashkina I."/>
            <person name="Stavusis J."/>
            <person name="El-Gharbawy A."/>
            <person name="Sebastian J."/>
            <person name="Puri R.D."/>
            <person name="Kulshrestha S."/>
            <person name="Verma I.C."/>
            <person name="Maier E.M."/>
            <person name="Haack T.B."/>
            <person name="Israni A."/>
            <person name="Baptista J."/>
            <person name="Gunning A."/>
            <person name="Rosenfeld J.A."/>
            <person name="Liu P."/>
            <person name="Joosten M."/>
            <person name="Rocha M.E."/>
            <person name="Hashem M.O."/>
            <person name="Aldhalaan H.M."/>
            <person name="Alkuraya F.S."/>
            <person name="Miyatake S."/>
            <person name="Matsumoto N."/>
            <person name="Krawitz P.M."/>
            <person name="Rossignol E."/>
            <person name="Kinoshita T."/>
            <person name="Campeau P.M."/>
        </authorList>
    </citation>
    <scope>VARIANTS DEE80 GLN-71; PRO-90; 131-LEU--PHE-554 DEL; HIS-155; HIS-232; ARG-CYS-GLN-TRP-282 INS; LEU-286; PRO-388; ARG-407 AND MET-537</scope>
    <scope>CHARACTERIZATION OF VARIANTS DEE80 GLN-71; HIS-232; ARG-CYS-GLN-TRP-282 INS; LEU-286; PRO-388 AND ARG-407</scope>
</reference>
<keyword id="KW-0256">Endoplasmic reticulum</keyword>
<keyword id="KW-0887">Epilepsy</keyword>
<keyword id="KW-0325">Glycoprotein</keyword>
<keyword id="KW-0328">Glycosyltransferase</keyword>
<keyword id="KW-0337">GPI-anchor biosynthesis</keyword>
<keyword id="KW-0472">Membrane</keyword>
<keyword id="KW-1267">Proteomics identification</keyword>
<keyword id="KW-1185">Reference proteome</keyword>
<keyword id="KW-0808">Transferase</keyword>
<keyword id="KW-0812">Transmembrane</keyword>
<keyword id="KW-1133">Transmembrane helix</keyword>
<name>PIGB_HUMAN</name>
<feature type="chain" id="PRO_0000246251" description="GPI alpha-1,2-mannosyltransferase 3">
    <location>
        <begin position="1"/>
        <end position="554"/>
    </location>
</feature>
<feature type="transmembrane region" description="Helical" evidence="1">
    <location>
        <begin position="63"/>
        <end position="83"/>
    </location>
</feature>
<feature type="transmembrane region" description="Helical" evidence="1">
    <location>
        <begin position="136"/>
        <end position="156"/>
    </location>
</feature>
<feature type="transmembrane region" description="Helical" evidence="1">
    <location>
        <begin position="192"/>
        <end position="212"/>
    </location>
</feature>
<feature type="transmembrane region" description="Helical" evidence="1">
    <location>
        <begin position="224"/>
        <end position="244"/>
    </location>
</feature>
<feature type="transmembrane region" description="Helical" evidence="1">
    <location>
        <begin position="255"/>
        <end position="275"/>
    </location>
</feature>
<feature type="transmembrane region" description="Helical" evidence="1">
    <location>
        <begin position="315"/>
        <end position="335"/>
    </location>
</feature>
<feature type="transmembrane region" description="Helical" evidence="1">
    <location>
        <begin position="340"/>
        <end position="360"/>
    </location>
</feature>
<feature type="transmembrane region" description="Helical" evidence="1">
    <location>
        <begin position="362"/>
        <end position="382"/>
    </location>
</feature>
<feature type="transmembrane region" description="Helical" evidence="1">
    <location>
        <begin position="387"/>
        <end position="407"/>
    </location>
</feature>
<feature type="glycosylation site" description="N-linked (GlcNAc...) asparagine" evidence="1">
    <location>
        <position position="26"/>
    </location>
</feature>
<feature type="glycosylation site" description="N-linked (GlcNAc...) asparagine" evidence="1">
    <location>
        <position position="427"/>
    </location>
</feature>
<feature type="sequence variant" id="VAR_027027" description="In dbSNP:rs17851556." evidence="6">
    <original>I</original>
    <variation>L</variation>
    <location>
        <position position="68"/>
    </location>
</feature>
<feature type="sequence variant" id="VAR_083070" description="In DEE80; strongly decreased protein levels; slightly decreased cell surface presence of GPI-anchored proteins; dbSNP:rs369838467." evidence="4">
    <original>R</original>
    <variation>Q</variation>
    <location>
        <position position="71"/>
    </location>
</feature>
<feature type="sequence variant" id="VAR_083071" description="In DEE80." evidence="4">
    <original>S</original>
    <variation>P</variation>
    <location>
        <position position="90"/>
    </location>
</feature>
<feature type="sequence variant" id="VAR_083072" description="In DEE80; uncertain significance." evidence="4">
    <location>
        <begin position="131"/>
        <end position="554"/>
    </location>
</feature>
<feature type="sequence variant" id="VAR_083073" description="In DEE80; uncertain significance; dbSNP:rs372158001." evidence="4">
    <original>D</original>
    <variation>H</variation>
    <location>
        <position position="155"/>
    </location>
</feature>
<feature type="sequence variant" id="VAR_027028" description="In dbSNP:rs2290344.">
    <original>M</original>
    <variation>T</variation>
    <location>
        <position position="162"/>
    </location>
</feature>
<feature type="sequence variant" id="VAR_083074" description="In DEE80; no effect on protein levels; decreased cell surface presence of GPI-anchored proteins; dbSNP:rs758196959." evidence="4">
    <original>R</original>
    <variation>H</variation>
    <location>
        <position position="232"/>
    </location>
</feature>
<feature type="sequence variant" id="VAR_083075" description="In DEE80; strongly decreased protein levels; decreased cell surface presence of GPI-anchored proteins." evidence="4">
    <original>Q</original>
    <variation>QRCQ</variation>
    <location>
        <position position="282"/>
    </location>
</feature>
<feature type="sequence variant" id="VAR_083076" description="In DEE80; decreased protein levels; decreased cell surface presence of GPI-anchored proteins; dbSNP:rs1595791368." evidence="4">
    <original>V</original>
    <variation>L</variation>
    <location>
        <position position="286"/>
    </location>
</feature>
<feature type="sequence variant" id="VAR_027029" description="In dbSNP:rs678892." evidence="2 6">
    <original>W</original>
    <variation>L</variation>
    <location>
        <position position="299"/>
    </location>
</feature>
<feature type="sequence variant" id="VAR_083077" description="In DEE80; decreased protein levels; decreased cell surface presence of GPI-anchored proteins; dbSNP:rs1595805026." evidence="4">
    <original>A</original>
    <variation>P</variation>
    <location>
        <position position="388"/>
    </location>
</feature>
<feature type="sequence variant" id="VAR_083078" description="In DEE80; decreased protein levels; slightly decreased cell surface presence of GPI-anchored proteins; dbSNP:rs1566960044." evidence="4">
    <original>H</original>
    <variation>R</variation>
    <location>
        <position position="407"/>
    </location>
</feature>
<feature type="sequence variant" id="VAR_027030" description="In dbSNP:rs17851554." evidence="6">
    <original>L</original>
    <variation>S</variation>
    <location>
        <position position="484"/>
    </location>
</feature>
<feature type="sequence variant" id="VAR_049224" description="In dbSNP:rs652397.">
    <original>S</original>
    <variation>G</variation>
    <location>
        <position position="502"/>
    </location>
</feature>
<feature type="sequence variant" id="VAR_083079" description="In DEE80; uncertain significance; dbSNP:rs2056056414." evidence="4">
    <original>I</original>
    <variation>M</variation>
    <location>
        <position position="537"/>
    </location>
</feature>
<feature type="sequence variant" id="VAR_027031" description="In dbSNP:rs2444042.">
    <original>K</original>
    <variation>T</variation>
    <location>
        <position position="551"/>
    </location>
</feature>
<feature type="sequence conflict" description="In Ref. 2; BAD97050." evidence="8" ref="2">
    <original>T</original>
    <variation>I</variation>
    <location>
        <position position="198"/>
    </location>
</feature>